<name>O16A_CONPU</name>
<organism>
    <name type="scientific">Conus purpurascens</name>
    <name type="common">Purple cone</name>
    <dbReference type="NCBI Taxonomy" id="41690"/>
    <lineage>
        <taxon>Eukaryota</taxon>
        <taxon>Metazoa</taxon>
        <taxon>Spiralia</taxon>
        <taxon>Lophotrochozoa</taxon>
        <taxon>Mollusca</taxon>
        <taxon>Gastropoda</taxon>
        <taxon>Caenogastropoda</taxon>
        <taxon>Neogastropoda</taxon>
        <taxon>Conoidea</taxon>
        <taxon>Conidae</taxon>
        <taxon>Conus</taxon>
        <taxon>Chelyconus</taxon>
    </lineage>
</organism>
<proteinExistence type="evidence at protein level"/>
<feature type="signal peptide" evidence="2">
    <location>
        <begin position="1"/>
        <end position="22"/>
    </location>
</feature>
<feature type="propeptide" id="PRO_0000034898" evidence="6">
    <location>
        <begin position="23"/>
        <end position="49"/>
    </location>
</feature>
<feature type="peptide" id="PRO_0000034899" description="Delta-conotoxin PVIA" evidence="6">
    <location>
        <begin position="52"/>
        <end position="80"/>
    </location>
</feature>
<feature type="modified residue" description="4-hydroxyproline" evidence="6">
    <location>
        <position position="57"/>
    </location>
</feature>
<feature type="modified residue" description="4-hydroxyproline" evidence="6">
    <location>
        <position position="65"/>
    </location>
</feature>
<feature type="modified residue" description="Glycine amide; in form delta-conotoxin PVIA" evidence="4">
    <location>
        <position position="80"/>
    </location>
</feature>
<feature type="disulfide bond" evidence="1">
    <location>
        <begin position="54"/>
        <end position="69"/>
    </location>
</feature>
<feature type="disulfide bond" evidence="1">
    <location>
        <begin position="61"/>
        <end position="73"/>
    </location>
</feature>
<feature type="disulfide bond" evidence="1">
    <location>
        <begin position="68"/>
        <end position="78"/>
    </location>
</feature>
<feature type="mutagenesis site" description="No loss of activity." evidence="4">
    <original>T</original>
    <variation>A</variation>
    <location>
        <position position="59"/>
    </location>
</feature>
<feature type="mutagenesis site" description="Loss of biological activity. However, coinjection of this mutant protects against the wild-type conotoxin, suggesting that the mutant binds competitively to the wild-type conotoxin ligand site. Such a protective effect does not occur for all physiological targets." evidence="4">
    <original>F</original>
    <variation>A</variation>
    <location>
        <position position="60"/>
    </location>
</feature>
<feature type="mutagenesis site" description="Loss of activity." evidence="4">
    <original>I</original>
    <variation>A</variation>
    <location>
        <position position="63"/>
    </location>
</feature>
<feature type="mutagenesis site" description="No loss of activity." evidence="4">
    <original>K</original>
    <variation>A</variation>
    <location>
        <position position="64"/>
    </location>
</feature>
<sequence length="81" mass="8945">MKLTCVMIVAVLFLTAWTFVTADDSKNGLENHFWKARDEMKNREASKLDKKEACYAPGTFCGIKPGLCCSEFCLPGVCFGG</sequence>
<protein>
    <recommendedName>
        <fullName evidence="7">Delta-conotoxin PVIA</fullName>
    </recommendedName>
    <alternativeName>
        <fullName evidence="7">Lockjaw peptide</fullName>
    </alternativeName>
</protein>
<keyword id="KW-0027">Amidation</keyword>
<keyword id="KW-0165">Cleavage on pair of basic residues</keyword>
<keyword id="KW-0903">Direct protein sequencing</keyword>
<keyword id="KW-1015">Disulfide bond</keyword>
<keyword id="KW-0379">Hydroxylation</keyword>
<keyword id="KW-0872">Ion channel impairing toxin</keyword>
<keyword id="KW-0960">Knottin</keyword>
<keyword id="KW-0528">Neurotoxin</keyword>
<keyword id="KW-0964">Secreted</keyword>
<keyword id="KW-0732">Signal</keyword>
<keyword id="KW-0800">Toxin</keyword>
<keyword id="KW-0738">Voltage-gated sodium channel impairing toxin</keyword>
<evidence type="ECO:0000250" key="1">
    <source>
        <dbReference type="UniProtKB" id="P56714"/>
    </source>
</evidence>
<evidence type="ECO:0000255" key="2"/>
<evidence type="ECO:0000269" key="3">
    <source>
    </source>
</evidence>
<evidence type="ECO:0000269" key="4">
    <source>
    </source>
</evidence>
<evidence type="ECO:0000269" key="5">
    <source>
    </source>
</evidence>
<evidence type="ECO:0000269" key="6">
    <source>
    </source>
</evidence>
<evidence type="ECO:0000303" key="7">
    <source>
    </source>
</evidence>
<evidence type="ECO:0000305" key="8"/>
<evidence type="ECO:0000305" key="9">
    <source>
    </source>
</evidence>
<dbReference type="PIR" id="A58651">
    <property type="entry name" value="A58651"/>
</dbReference>
<dbReference type="SMR" id="P58913"/>
<dbReference type="ConoServer" id="1563">
    <property type="toxin name" value="PVIA precursor"/>
</dbReference>
<dbReference type="GO" id="GO:0005576">
    <property type="term" value="C:extracellular region"/>
    <property type="evidence" value="ECO:0007669"/>
    <property type="project" value="UniProtKB-SubCell"/>
</dbReference>
<dbReference type="GO" id="GO:0019871">
    <property type="term" value="F:sodium channel inhibitor activity"/>
    <property type="evidence" value="ECO:0007669"/>
    <property type="project" value="InterPro"/>
</dbReference>
<dbReference type="GO" id="GO:0090729">
    <property type="term" value="F:toxin activity"/>
    <property type="evidence" value="ECO:0007669"/>
    <property type="project" value="UniProtKB-KW"/>
</dbReference>
<dbReference type="InterPro" id="IPR004214">
    <property type="entry name" value="Conotoxin"/>
</dbReference>
<dbReference type="InterPro" id="IPR012322">
    <property type="entry name" value="Conotoxin_d-typ_CS"/>
</dbReference>
<dbReference type="Pfam" id="PF02950">
    <property type="entry name" value="Conotoxin"/>
    <property type="match status" value="1"/>
</dbReference>
<dbReference type="PROSITE" id="PS60005">
    <property type="entry name" value="DELTA_CONOTOXIN"/>
    <property type="match status" value="1"/>
</dbReference>
<comment type="function">
    <text evidence="3 5">Delta-conotoxins bind to site 6 of voltage-gated sodium channels (Nav) and inhibit the inactivation process. This toxin shows weak effects on rNav1.2/SCN2A (EC(50)=2.9 uM), rNav1.4/SCN4A (EC(50)=5.2 uM), hNav1.7/SCN9A (EC(50)=1.9 uM) and rNav1.7/SCN9A (EC(50)=6.4 uM) (PubMed:10627583). In vivo, this toxin shows different effects. In mice, injection of this toxin causes hyperactivity, rapid running, limb extension, and death. In fish, the peptide elicites spurts of rapid swimming, with twisted motions, quivering fins and the lockjaw extended mouth syndrome. Rigid paralysis and death are observed at higher doses. In mollusks, this peptide is inactive. Injection of this peptide together with the kappa-conotoxin PVIIA causes the sudden tetanus of prey (STOP) syndrome, which is a single, lethal 'fin-pop' in envenomed fish.</text>
</comment>
<comment type="subcellular location">
    <subcellularLocation>
        <location evidence="6">Secreted</location>
    </subcellularLocation>
</comment>
<comment type="tissue specificity">
    <text evidence="9">Expressed by the venom duct.</text>
</comment>
<comment type="domain">
    <text evidence="1">The presence of a 'disulfide through disulfide knot' structurally defines this protein as a knottin.</text>
</comment>
<comment type="domain">
    <text evidence="8">The cysteine framework is VI/VII (C-C-CC-C-C).</text>
</comment>
<comment type="PTM">
    <text>The difference between delta-conotoxin PVIA and [deamido]-delta-conotoxin PVIA lies in the state of amidation of Gly-80.</text>
</comment>
<comment type="mass spectrometry" mass="2997.3" method="Unknown" evidence="6"/>
<comment type="similarity">
    <text evidence="8">Belongs to the conotoxin O1 superfamily.</text>
</comment>
<accession>P58913</accession>
<reference key="1">
    <citation type="journal article" date="1995" name="Biochemistry">
        <title>Purification, characterization, synthesis, and cloning of the lockjaw peptide from Conus purpurascens venom.</title>
        <authorList>
            <person name="Shon K.-J."/>
            <person name="Grilley M.M."/>
            <person name="Marsh M."/>
            <person name="Yoshikami D."/>
            <person name="Hall A.R."/>
            <person name="Kurz B."/>
            <person name="Gray W.R."/>
            <person name="Imperial J.S."/>
            <person name="Hillyard D.R."/>
            <person name="Olivera B.M."/>
        </authorList>
    </citation>
    <scope>NUCLEOTIDE SEQUENCE [MRNA]</scope>
    <scope>PROTEIN SEQUENCE OF 52-80</scope>
    <scope>SYNTHESIS OF 52-80</scope>
    <scope>HYDROXYLATION AT PRO-57 AND PRO-65</scope>
    <scope>MASS SPECTROMETRY</scope>
    <scope>SUBCELLULAR LOCATION</scope>
    <source>
        <tissue>Venom</tissue>
        <tissue>Venom duct</tissue>
    </source>
</reference>
<reference key="2">
    <citation type="journal article" date="1996" name="Nature">
        <title>Strategy for rapid immobilization of prey by a fish-hunting marine snail.</title>
        <authorList>
            <person name="Terlau H."/>
            <person name="Shon K.-J."/>
            <person name="Grilley M.M."/>
            <person name="Stocker M."/>
            <person name="Stuehmer W."/>
            <person name="Olivera B.M."/>
        </authorList>
    </citation>
    <scope>PROTEIN SEQUENCE OF 52-80</scope>
    <scope>SYNTHESIS OF 52-80</scope>
</reference>
<reference key="3">
    <citation type="journal article" date="2000" name="J. Neurosci.">
        <title>Distinction among neuronal subtypes of voltage-activated sodium channels by mu-conotoxin PIIIA.</title>
        <authorList>
            <person name="Safo P."/>
            <person name="Rosenbaum T."/>
            <person name="Shcherbatko A."/>
            <person name="Choi D.-Y."/>
            <person name="Han E."/>
            <person name="Toledo-Aral J.J."/>
            <person name="Olivera B.M."/>
            <person name="Brehm P."/>
            <person name="Mandel G."/>
        </authorList>
    </citation>
    <scope>FUNCTION</scope>
</reference>
<reference key="4">
    <citation type="journal article" date="2001" name="Biochemistry">
        <title>Delta-conotoxin structure/function through a cladistic analysis.</title>
        <authorList>
            <person name="Bulaj G."/>
            <person name="DeLaCruz R."/>
            <person name="Azimi-Zonooz A."/>
            <person name="West P."/>
            <person name="Watkins M."/>
            <person name="Yoshikami D."/>
            <person name="Olivera B.M."/>
        </authorList>
    </citation>
    <scope>SYNTHESIS OF 52-80</scope>
    <scope>AMIDATION AT GLY-80</scope>
    <scope>MUTAGENESIS OF THR-59; PHE-60; ILE-63 AND LYS-64</scope>
</reference>